<protein>
    <recommendedName>
        <fullName>Activin receptor type-2B</fullName>
        <ecNumber>2.7.11.30</ecNumber>
    </recommendedName>
    <alternativeName>
        <fullName>Activin receptor type IIB</fullName>
        <shortName>ACTR-IIB</shortName>
    </alternativeName>
</protein>
<feature type="signal peptide" evidence="4">
    <location>
        <begin position="1"/>
        <end position="18"/>
    </location>
</feature>
<feature type="chain" id="PRO_0000024406" description="Activin receptor type-2B">
    <location>
        <begin position="19"/>
        <end position="513"/>
    </location>
</feature>
<feature type="topological domain" description="Extracellular" evidence="4">
    <location>
        <begin position="19"/>
        <end position="137"/>
    </location>
</feature>
<feature type="transmembrane region" description="Helical" evidence="4">
    <location>
        <begin position="138"/>
        <end position="158"/>
    </location>
</feature>
<feature type="topological domain" description="Cytoplasmic" evidence="4">
    <location>
        <begin position="159"/>
        <end position="513"/>
    </location>
</feature>
<feature type="domain" description="Protein kinase" evidence="5">
    <location>
        <begin position="190"/>
        <end position="481"/>
    </location>
</feature>
<feature type="region of interest" description="Interaction with DYNLT1" evidence="2">
    <location>
        <begin position="492"/>
        <end position="513"/>
    </location>
</feature>
<feature type="active site" description="Proton acceptor" evidence="5 6">
    <location>
        <position position="322"/>
    </location>
</feature>
<feature type="binding site" evidence="5">
    <location>
        <begin position="196"/>
        <end position="204"/>
    </location>
    <ligand>
        <name>ATP</name>
        <dbReference type="ChEBI" id="CHEBI:30616"/>
    </ligand>
</feature>
<feature type="binding site" evidence="5">
    <location>
        <position position="217"/>
    </location>
    <ligand>
        <name>ATP</name>
        <dbReference type="ChEBI" id="CHEBI:30616"/>
    </ligand>
</feature>
<feature type="glycosylation site" description="N-linked (GlcNAc...) asparagine" evidence="4">
    <location>
        <position position="42"/>
    </location>
</feature>
<feature type="glycosylation site" description="N-linked (GlcNAc...) asparagine" evidence="4">
    <location>
        <position position="65"/>
    </location>
</feature>
<feature type="disulfide bond" evidence="7 9 10">
    <location>
        <begin position="29"/>
        <end position="59"/>
    </location>
</feature>
<feature type="disulfide bond" evidence="7 9 10">
    <location>
        <begin position="49"/>
        <end position="77"/>
    </location>
</feature>
<feature type="disulfide bond" evidence="7 9 10">
    <location>
        <begin position="84"/>
        <end position="103"/>
    </location>
</feature>
<feature type="disulfide bond" evidence="7 9 10">
    <location>
        <begin position="90"/>
        <end position="102"/>
    </location>
</feature>
<feature type="disulfide bond" evidence="7 9 10">
    <location>
        <begin position="104"/>
        <end position="109"/>
    </location>
</feature>
<feature type="sequence conflict" description="In Ref. 1; AAA40772 and 2." evidence="8" ref="1 2">
    <original>R</original>
    <variation>P</variation>
    <location>
        <position position="64"/>
    </location>
</feature>
<feature type="sequence conflict" description="In Ref. 2 and 3; AAH97358." evidence="8" ref="2 3">
    <location>
        <position position="255"/>
    </location>
</feature>
<feature type="sequence conflict" description="In Ref. 1; AAA40772 and 2." evidence="8" ref="1 2">
    <original>S</original>
    <variation>G</variation>
    <location>
        <position position="488"/>
    </location>
</feature>
<feature type="sequence conflict" description="In Ref. 1; AAA40772 and 2." evidence="8" ref="1 2">
    <original>V</original>
    <variation>S</variation>
    <location>
        <position position="501"/>
    </location>
</feature>
<feature type="strand" evidence="11">
    <location>
        <begin position="27"/>
        <end position="33"/>
    </location>
</feature>
<feature type="helix" evidence="11">
    <location>
        <begin position="36"/>
        <end position="39"/>
    </location>
</feature>
<feature type="strand" evidence="11">
    <location>
        <begin position="43"/>
        <end position="49"/>
    </location>
</feature>
<feature type="strand" evidence="11">
    <location>
        <begin position="58"/>
        <end position="66"/>
    </location>
</feature>
<feature type="strand" evidence="11">
    <location>
        <begin position="69"/>
        <end position="78"/>
    </location>
</feature>
<feature type="helix" evidence="11">
    <location>
        <begin position="82"/>
        <end position="84"/>
    </location>
</feature>
<feature type="strand" evidence="11">
    <location>
        <begin position="89"/>
        <end position="92"/>
    </location>
</feature>
<feature type="strand" evidence="11">
    <location>
        <begin position="94"/>
        <end position="96"/>
    </location>
</feature>
<feature type="strand" evidence="11">
    <location>
        <begin position="98"/>
        <end position="106"/>
    </location>
</feature>
<feature type="turn" evidence="11">
    <location>
        <begin position="107"/>
        <end position="110"/>
    </location>
</feature>
<feature type="strand" evidence="11">
    <location>
        <begin position="111"/>
        <end position="115"/>
    </location>
</feature>
<name>AVR2B_RAT</name>
<dbReference type="EC" id="2.7.11.30"/>
<dbReference type="EMBL" id="L10640">
    <property type="protein sequence ID" value="AAA40772.1"/>
    <property type="molecule type" value="mRNA"/>
</dbReference>
<dbReference type="EMBL" id="BC097358">
    <property type="protein sequence ID" value="AAH97358.1"/>
    <property type="molecule type" value="mRNA"/>
</dbReference>
<dbReference type="PIR" id="B49193">
    <property type="entry name" value="B49193"/>
</dbReference>
<dbReference type="PIR" id="JQ1484">
    <property type="entry name" value="JQ1484"/>
</dbReference>
<dbReference type="RefSeq" id="NP_113742.1">
    <property type="nucleotide sequence ID" value="NM_031554.1"/>
</dbReference>
<dbReference type="PDB" id="1NYS">
    <property type="method" value="X-ray"/>
    <property type="resolution" value="3.05 A"/>
    <property type="chains" value="A/C=19-119"/>
</dbReference>
<dbReference type="PDB" id="1NYU">
    <property type="method" value="X-ray"/>
    <property type="resolution" value="3.10 A"/>
    <property type="chains" value="A/C=19-119"/>
</dbReference>
<dbReference type="PDB" id="6MAC">
    <property type="method" value="X-ray"/>
    <property type="resolution" value="2.34 A"/>
    <property type="chains" value="C=26-120"/>
</dbReference>
<dbReference type="PDBsum" id="1NYS"/>
<dbReference type="PDBsum" id="1NYU"/>
<dbReference type="PDBsum" id="6MAC"/>
<dbReference type="SMR" id="P38445"/>
<dbReference type="FunCoup" id="P38445">
    <property type="interactions" value="1120"/>
</dbReference>
<dbReference type="STRING" id="10116.ENSRNOP00000019777"/>
<dbReference type="GlyCosmos" id="P38445">
    <property type="glycosylation" value="2 sites, No reported glycans"/>
</dbReference>
<dbReference type="GlyGen" id="P38445">
    <property type="glycosylation" value="3 sites"/>
</dbReference>
<dbReference type="PhosphoSitePlus" id="P38445"/>
<dbReference type="PaxDb" id="10116-ENSRNOP00000019777"/>
<dbReference type="GeneID" id="25366"/>
<dbReference type="KEGG" id="rno:25366"/>
<dbReference type="UCSC" id="RGD:2028">
    <property type="organism name" value="rat"/>
</dbReference>
<dbReference type="AGR" id="RGD:2028"/>
<dbReference type="CTD" id="93"/>
<dbReference type="RGD" id="2028">
    <property type="gene designation" value="Acvr2b"/>
</dbReference>
<dbReference type="eggNOG" id="KOG3653">
    <property type="taxonomic scope" value="Eukaryota"/>
</dbReference>
<dbReference type="InParanoid" id="P38445"/>
<dbReference type="Reactome" id="R-RNO-1502540">
    <property type="pathway name" value="Signaling by Activin"/>
</dbReference>
<dbReference type="Reactome" id="R-RNO-201451">
    <property type="pathway name" value="Signaling by BMP"/>
</dbReference>
<dbReference type="EvolutionaryTrace" id="P38445"/>
<dbReference type="PRO" id="PR:P38445"/>
<dbReference type="Proteomes" id="UP000002494">
    <property type="component" value="Unplaced"/>
</dbReference>
<dbReference type="GO" id="GO:0048179">
    <property type="term" value="C:activin receptor complex"/>
    <property type="evidence" value="ECO:0000318"/>
    <property type="project" value="GO_Central"/>
</dbReference>
<dbReference type="GO" id="GO:0005737">
    <property type="term" value="C:cytoplasm"/>
    <property type="evidence" value="ECO:0000266"/>
    <property type="project" value="RGD"/>
</dbReference>
<dbReference type="GO" id="GO:0005886">
    <property type="term" value="C:plasma membrane"/>
    <property type="evidence" value="ECO:0000266"/>
    <property type="project" value="RGD"/>
</dbReference>
<dbReference type="GO" id="GO:0032991">
    <property type="term" value="C:protein-containing complex"/>
    <property type="evidence" value="ECO:0000266"/>
    <property type="project" value="RGD"/>
</dbReference>
<dbReference type="GO" id="GO:0043235">
    <property type="term" value="C:receptor complex"/>
    <property type="evidence" value="ECO:0000266"/>
    <property type="project" value="RGD"/>
</dbReference>
<dbReference type="GO" id="GO:0048185">
    <property type="term" value="F:activin binding"/>
    <property type="evidence" value="ECO:0000314"/>
    <property type="project" value="RGD"/>
</dbReference>
<dbReference type="GO" id="GO:0017002">
    <property type="term" value="F:activin receptor activity"/>
    <property type="evidence" value="ECO:0000318"/>
    <property type="project" value="GO_Central"/>
</dbReference>
<dbReference type="GO" id="GO:0016362">
    <property type="term" value="F:activin receptor activity, type II"/>
    <property type="evidence" value="ECO:0000266"/>
    <property type="project" value="RGD"/>
</dbReference>
<dbReference type="GO" id="GO:0005524">
    <property type="term" value="F:ATP binding"/>
    <property type="evidence" value="ECO:0007669"/>
    <property type="project" value="UniProtKB-KW"/>
</dbReference>
<dbReference type="GO" id="GO:0019838">
    <property type="term" value="F:growth factor binding"/>
    <property type="evidence" value="ECO:0000266"/>
    <property type="project" value="RGD"/>
</dbReference>
<dbReference type="GO" id="GO:0034711">
    <property type="term" value="F:inhibin binding"/>
    <property type="evidence" value="ECO:0000314"/>
    <property type="project" value="RGD"/>
</dbReference>
<dbReference type="GO" id="GO:0019209">
    <property type="term" value="F:kinase activator activity"/>
    <property type="evidence" value="ECO:0000266"/>
    <property type="project" value="RGD"/>
</dbReference>
<dbReference type="GO" id="GO:0046872">
    <property type="term" value="F:metal ion binding"/>
    <property type="evidence" value="ECO:0007669"/>
    <property type="project" value="UniProtKB-KW"/>
</dbReference>
<dbReference type="GO" id="GO:0004674">
    <property type="term" value="F:protein serine/threonine kinase activity"/>
    <property type="evidence" value="ECO:0000266"/>
    <property type="project" value="RGD"/>
</dbReference>
<dbReference type="GO" id="GO:0004712">
    <property type="term" value="F:protein serine/threonine/tyrosine kinase activity"/>
    <property type="evidence" value="ECO:0000266"/>
    <property type="project" value="RGD"/>
</dbReference>
<dbReference type="GO" id="GO:0004675">
    <property type="term" value="F:transmembrane receptor protein serine/threonine kinase activity"/>
    <property type="evidence" value="ECO:0000304"/>
    <property type="project" value="RGD"/>
</dbReference>
<dbReference type="GO" id="GO:0032924">
    <property type="term" value="P:activin receptor signaling pathway"/>
    <property type="evidence" value="ECO:0000266"/>
    <property type="project" value="RGD"/>
</dbReference>
<dbReference type="GO" id="GO:0030325">
    <property type="term" value="P:adrenal gland development"/>
    <property type="evidence" value="ECO:0000270"/>
    <property type="project" value="RGD"/>
</dbReference>
<dbReference type="GO" id="GO:0009952">
    <property type="term" value="P:anterior/posterior pattern specification"/>
    <property type="evidence" value="ECO:0000266"/>
    <property type="project" value="RGD"/>
</dbReference>
<dbReference type="GO" id="GO:0060840">
    <property type="term" value="P:artery development"/>
    <property type="evidence" value="ECO:0000266"/>
    <property type="project" value="RGD"/>
</dbReference>
<dbReference type="GO" id="GO:0001974">
    <property type="term" value="P:blood vessel remodeling"/>
    <property type="evidence" value="ECO:0000266"/>
    <property type="project" value="RGD"/>
</dbReference>
<dbReference type="GO" id="GO:0030509">
    <property type="term" value="P:BMP signaling pathway"/>
    <property type="evidence" value="ECO:0000266"/>
    <property type="project" value="RGD"/>
</dbReference>
<dbReference type="GO" id="GO:0071363">
    <property type="term" value="P:cellular response to growth factor stimulus"/>
    <property type="evidence" value="ECO:0000318"/>
    <property type="project" value="GO_Central"/>
</dbReference>
<dbReference type="GO" id="GO:0007368">
    <property type="term" value="P:determination of left/right symmetry"/>
    <property type="evidence" value="ECO:0000266"/>
    <property type="project" value="RGD"/>
</dbReference>
<dbReference type="GO" id="GO:0048617">
    <property type="term" value="P:embryonic foregut morphogenesis"/>
    <property type="evidence" value="ECO:0000266"/>
    <property type="project" value="RGD"/>
</dbReference>
<dbReference type="GO" id="GO:0001702">
    <property type="term" value="P:gastrulation with mouth forming second"/>
    <property type="evidence" value="ECO:0000266"/>
    <property type="project" value="RGD"/>
</dbReference>
<dbReference type="GO" id="GO:0007507">
    <property type="term" value="P:heart development"/>
    <property type="evidence" value="ECO:0000266"/>
    <property type="project" value="RGD"/>
</dbReference>
<dbReference type="GO" id="GO:0030073">
    <property type="term" value="P:insulin secretion"/>
    <property type="evidence" value="ECO:0000266"/>
    <property type="project" value="RGD"/>
</dbReference>
<dbReference type="GO" id="GO:0006879">
    <property type="term" value="P:intracellular iron ion homeostasis"/>
    <property type="evidence" value="ECO:0000266"/>
    <property type="project" value="RGD"/>
</dbReference>
<dbReference type="GO" id="GO:0001822">
    <property type="term" value="P:kidney development"/>
    <property type="evidence" value="ECO:0000266"/>
    <property type="project" value="RGD"/>
</dbReference>
<dbReference type="GO" id="GO:0030324">
    <property type="term" value="P:lung development"/>
    <property type="evidence" value="ECO:0000266"/>
    <property type="project" value="RGD"/>
</dbReference>
<dbReference type="GO" id="GO:0001946">
    <property type="term" value="P:lymphangiogenesis"/>
    <property type="evidence" value="ECO:0000266"/>
    <property type="project" value="RGD"/>
</dbReference>
<dbReference type="GO" id="GO:0060836">
    <property type="term" value="P:lymphatic endothelial cell differentiation"/>
    <property type="evidence" value="ECO:0000266"/>
    <property type="project" value="RGD"/>
</dbReference>
<dbReference type="GO" id="GO:0007498">
    <property type="term" value="P:mesoderm development"/>
    <property type="evidence" value="ECO:0000266"/>
    <property type="project" value="RGD"/>
</dbReference>
<dbReference type="GO" id="GO:0120163">
    <property type="term" value="P:negative regulation of cold-induced thermogenesis"/>
    <property type="evidence" value="ECO:0000250"/>
    <property type="project" value="YuBioLab"/>
</dbReference>
<dbReference type="GO" id="GO:0030279">
    <property type="term" value="P:negative regulation of ossification"/>
    <property type="evidence" value="ECO:0000266"/>
    <property type="project" value="RGD"/>
</dbReference>
<dbReference type="GO" id="GO:0000122">
    <property type="term" value="P:negative regulation of transcription by RNA polymerase II"/>
    <property type="evidence" value="ECO:0000266"/>
    <property type="project" value="RGD"/>
</dbReference>
<dbReference type="GO" id="GO:0042475">
    <property type="term" value="P:odontogenesis of dentin-containing tooth"/>
    <property type="evidence" value="ECO:0000266"/>
    <property type="project" value="RGD"/>
</dbReference>
<dbReference type="GO" id="GO:0035265">
    <property type="term" value="P:organ growth"/>
    <property type="evidence" value="ECO:0000266"/>
    <property type="project" value="RGD"/>
</dbReference>
<dbReference type="GO" id="GO:0031016">
    <property type="term" value="P:pancreas development"/>
    <property type="evidence" value="ECO:0000266"/>
    <property type="project" value="RGD"/>
</dbReference>
<dbReference type="GO" id="GO:0007389">
    <property type="term" value="P:pattern specification process"/>
    <property type="evidence" value="ECO:0000266"/>
    <property type="project" value="RGD"/>
</dbReference>
<dbReference type="GO" id="GO:0032927">
    <property type="term" value="P:positive regulation of activin receptor signaling pathway"/>
    <property type="evidence" value="ECO:0000266"/>
    <property type="project" value="RGD"/>
</dbReference>
<dbReference type="GO" id="GO:0030501">
    <property type="term" value="P:positive regulation of bone mineralization"/>
    <property type="evidence" value="ECO:0000266"/>
    <property type="project" value="RGD"/>
</dbReference>
<dbReference type="GO" id="GO:0045669">
    <property type="term" value="P:positive regulation of osteoblast differentiation"/>
    <property type="evidence" value="ECO:0000266"/>
    <property type="project" value="RGD"/>
</dbReference>
<dbReference type="GO" id="GO:0009791">
    <property type="term" value="P:post-embryonic development"/>
    <property type="evidence" value="ECO:0000266"/>
    <property type="project" value="RGD"/>
</dbReference>
<dbReference type="GO" id="GO:0006355">
    <property type="term" value="P:regulation of DNA-templated transcription"/>
    <property type="evidence" value="ECO:0000266"/>
    <property type="project" value="RGD"/>
</dbReference>
<dbReference type="GO" id="GO:0009966">
    <property type="term" value="P:regulation of signal transduction"/>
    <property type="evidence" value="ECO:0000266"/>
    <property type="project" value="RGD"/>
</dbReference>
<dbReference type="GO" id="GO:0014823">
    <property type="term" value="P:response to activity"/>
    <property type="evidence" value="ECO:0000270"/>
    <property type="project" value="RGD"/>
</dbReference>
<dbReference type="GO" id="GO:0009749">
    <property type="term" value="P:response to glucose"/>
    <property type="evidence" value="ECO:0000266"/>
    <property type="project" value="RGD"/>
</dbReference>
<dbReference type="GO" id="GO:0061298">
    <property type="term" value="P:retina vasculature development in camera-type eye"/>
    <property type="evidence" value="ECO:0000266"/>
    <property type="project" value="RGD"/>
</dbReference>
<dbReference type="GO" id="GO:0060021">
    <property type="term" value="P:roof of mouth development"/>
    <property type="evidence" value="ECO:0000266"/>
    <property type="project" value="RGD"/>
</dbReference>
<dbReference type="GO" id="GO:0019953">
    <property type="term" value="P:sexual reproduction"/>
    <property type="evidence" value="ECO:0000303"/>
    <property type="project" value="RGD"/>
</dbReference>
<dbReference type="GO" id="GO:0007165">
    <property type="term" value="P:signal transduction"/>
    <property type="evidence" value="ECO:0000266"/>
    <property type="project" value="RGD"/>
</dbReference>
<dbReference type="GO" id="GO:0001501">
    <property type="term" value="P:skeletal system development"/>
    <property type="evidence" value="ECO:0000266"/>
    <property type="project" value="RGD"/>
</dbReference>
<dbReference type="GO" id="GO:0048705">
    <property type="term" value="P:skeletal system morphogenesis"/>
    <property type="evidence" value="ECO:0000266"/>
    <property type="project" value="RGD"/>
</dbReference>
<dbReference type="GO" id="GO:0060841">
    <property type="term" value="P:venous blood vessel development"/>
    <property type="evidence" value="ECO:0000266"/>
    <property type="project" value="RGD"/>
</dbReference>
<dbReference type="CDD" id="cd14140">
    <property type="entry name" value="STKc_ACVR2b"/>
    <property type="match status" value="1"/>
</dbReference>
<dbReference type="CDD" id="cd23632">
    <property type="entry name" value="TFP_LU_ECD_ACVR2B"/>
    <property type="match status" value="1"/>
</dbReference>
<dbReference type="FunFam" id="1.10.510.10:FF:000099">
    <property type="entry name" value="Serine/threonine-protein kinase receptor"/>
    <property type="match status" value="1"/>
</dbReference>
<dbReference type="FunFam" id="2.10.60.10:FF:000002">
    <property type="entry name" value="Serine/threonine-protein kinase receptor"/>
    <property type="match status" value="1"/>
</dbReference>
<dbReference type="FunFam" id="3.30.200.20:FF:000094">
    <property type="entry name" value="Serine/threonine-protein kinase receptor"/>
    <property type="match status" value="1"/>
</dbReference>
<dbReference type="Gene3D" id="2.10.60.10">
    <property type="entry name" value="CD59"/>
    <property type="match status" value="1"/>
</dbReference>
<dbReference type="Gene3D" id="3.30.200.20">
    <property type="entry name" value="Phosphorylase Kinase, domain 1"/>
    <property type="match status" value="1"/>
</dbReference>
<dbReference type="Gene3D" id="1.10.510.10">
    <property type="entry name" value="Transferase(Phosphotransferase) domain 1"/>
    <property type="match status" value="1"/>
</dbReference>
<dbReference type="IDEAL" id="IID50130"/>
<dbReference type="InterPro" id="IPR000472">
    <property type="entry name" value="Activin_recp"/>
</dbReference>
<dbReference type="InterPro" id="IPR011009">
    <property type="entry name" value="Kinase-like_dom_sf"/>
</dbReference>
<dbReference type="InterPro" id="IPR000719">
    <property type="entry name" value="Prot_kinase_dom"/>
</dbReference>
<dbReference type="InterPro" id="IPR008271">
    <property type="entry name" value="Ser/Thr_kinase_AS"/>
</dbReference>
<dbReference type="InterPro" id="IPR045860">
    <property type="entry name" value="Snake_toxin-like_sf"/>
</dbReference>
<dbReference type="InterPro" id="IPR000333">
    <property type="entry name" value="TGFB_receptor"/>
</dbReference>
<dbReference type="PANTHER" id="PTHR23255:SF70">
    <property type="entry name" value="ACTIVIN RECEPTOR TYPE-2B"/>
    <property type="match status" value="1"/>
</dbReference>
<dbReference type="PANTHER" id="PTHR23255">
    <property type="entry name" value="TRANSFORMING GROWTH FACTOR-BETA RECEPTOR TYPE I AND II"/>
    <property type="match status" value="1"/>
</dbReference>
<dbReference type="Pfam" id="PF01064">
    <property type="entry name" value="Activin_recp"/>
    <property type="match status" value="1"/>
</dbReference>
<dbReference type="Pfam" id="PF00069">
    <property type="entry name" value="Pkinase"/>
    <property type="match status" value="1"/>
</dbReference>
<dbReference type="PRINTS" id="PR00653">
    <property type="entry name" value="ACTIVIN2R"/>
</dbReference>
<dbReference type="SUPFAM" id="SSF56112">
    <property type="entry name" value="Protein kinase-like (PK-like)"/>
    <property type="match status" value="1"/>
</dbReference>
<dbReference type="SUPFAM" id="SSF57302">
    <property type="entry name" value="Snake toxin-like"/>
    <property type="match status" value="1"/>
</dbReference>
<dbReference type="PROSITE" id="PS50011">
    <property type="entry name" value="PROTEIN_KINASE_DOM"/>
    <property type="match status" value="1"/>
</dbReference>
<dbReference type="PROSITE" id="PS00108">
    <property type="entry name" value="PROTEIN_KINASE_ST"/>
    <property type="match status" value="1"/>
</dbReference>
<organism>
    <name type="scientific">Rattus norvegicus</name>
    <name type="common">Rat</name>
    <dbReference type="NCBI Taxonomy" id="10116"/>
    <lineage>
        <taxon>Eukaryota</taxon>
        <taxon>Metazoa</taxon>
        <taxon>Chordata</taxon>
        <taxon>Craniata</taxon>
        <taxon>Vertebrata</taxon>
        <taxon>Euteleostomi</taxon>
        <taxon>Mammalia</taxon>
        <taxon>Eutheria</taxon>
        <taxon>Euarchontoglires</taxon>
        <taxon>Glires</taxon>
        <taxon>Rodentia</taxon>
        <taxon>Myomorpha</taxon>
        <taxon>Muroidea</taxon>
        <taxon>Muridae</taxon>
        <taxon>Murinae</taxon>
        <taxon>Rattus</taxon>
    </lineage>
</organism>
<evidence type="ECO:0000250" key="1"/>
<evidence type="ECO:0000250" key="2">
    <source>
        <dbReference type="UniProtKB" id="P27040"/>
    </source>
</evidence>
<evidence type="ECO:0000250" key="3">
    <source>
        <dbReference type="UniProtKB" id="Q13705"/>
    </source>
</evidence>
<evidence type="ECO:0000255" key="4"/>
<evidence type="ECO:0000255" key="5">
    <source>
        <dbReference type="PROSITE-ProRule" id="PRU00159"/>
    </source>
</evidence>
<evidence type="ECO:0000255" key="6">
    <source>
        <dbReference type="PROSITE-ProRule" id="PRU10027"/>
    </source>
</evidence>
<evidence type="ECO:0000269" key="7">
    <source>
    </source>
</evidence>
<evidence type="ECO:0000305" key="8"/>
<evidence type="ECO:0007744" key="9">
    <source>
        <dbReference type="PDB" id="1NYS"/>
    </source>
</evidence>
<evidence type="ECO:0007744" key="10">
    <source>
        <dbReference type="PDB" id="1NYU"/>
    </source>
</evidence>
<evidence type="ECO:0007829" key="11">
    <source>
        <dbReference type="PDB" id="6MAC"/>
    </source>
</evidence>
<comment type="function">
    <text evidence="1">Transmembrane serine/threonine kinase activin type-2 receptor forming an activin receptor complex with activin type-1 serine/threonine kinase receptors (ACVR1, ACVR1B or ACVR1c). Transduces the activin signal from the cell surface to the cytoplasm and is thus regulating many physiological and pathological processes including neuronal differentiation and neuronal survival, hair follicle development and cycling, FSH production by the pituitary gland, wound healing, extracellular matrix production, immunosuppression and carcinogenesis. Activin is also thought to have a paracrine or autocrine role in follicular development in the ovary. Within the receptor complex, the type-2 receptors act as a primary activin receptors (binds activin-A/INHBA, activin-B/INHBB as well as inhibin-A/INHA-INHBA). The type-1 receptors like ACVR1B act as downstream transducers of activin signals. Activin binds to type-2 receptor at the plasma membrane and activates its serine-threonine kinase. The activated receptor type-2 then phosphorylates and activates the type-1 receptor. Once activated, the type-1 receptor binds and phosphorylates the SMAD proteins SMAD2 and SMAD3, on serine residues of the C-terminal tail. Soon after their association with the activin receptor and subsequent phosphorylation, SMAD2 and SMAD3 are released into the cytoplasm where they interact with the common partner SMAD4. This SMAD complex translocates into the nucleus where it mediates activin-induced transcription. Inhibitory SMAD7, which is recruited to ACVR1B through FKBP1A, can prevent the association of SMAD2 and SMAD3 with the activin receptor complex, thereby blocking the activin signal. Activin signal transduction is also antagonized by the binding to the receptor of inhibin-B via the IGSF1 inhibin coreceptor (By similarity).</text>
</comment>
<comment type="catalytic activity">
    <reaction>
        <text>L-threonyl-[receptor-protein] + ATP = O-phospho-L-threonyl-[receptor-protein] + ADP + H(+)</text>
        <dbReference type="Rhea" id="RHEA:44880"/>
        <dbReference type="Rhea" id="RHEA-COMP:11024"/>
        <dbReference type="Rhea" id="RHEA-COMP:11025"/>
        <dbReference type="ChEBI" id="CHEBI:15378"/>
        <dbReference type="ChEBI" id="CHEBI:30013"/>
        <dbReference type="ChEBI" id="CHEBI:30616"/>
        <dbReference type="ChEBI" id="CHEBI:61977"/>
        <dbReference type="ChEBI" id="CHEBI:456216"/>
        <dbReference type="EC" id="2.7.11.30"/>
    </reaction>
</comment>
<comment type="catalytic activity">
    <reaction>
        <text>L-seryl-[receptor-protein] + ATP = O-phospho-L-seryl-[receptor-protein] + ADP + H(+)</text>
        <dbReference type="Rhea" id="RHEA:18673"/>
        <dbReference type="Rhea" id="RHEA-COMP:11022"/>
        <dbReference type="Rhea" id="RHEA-COMP:11023"/>
        <dbReference type="ChEBI" id="CHEBI:15378"/>
        <dbReference type="ChEBI" id="CHEBI:29999"/>
        <dbReference type="ChEBI" id="CHEBI:30616"/>
        <dbReference type="ChEBI" id="CHEBI:83421"/>
        <dbReference type="ChEBI" id="CHEBI:456216"/>
        <dbReference type="EC" id="2.7.11.30"/>
    </reaction>
</comment>
<comment type="cofactor">
    <cofactor evidence="1">
        <name>Mg(2+)</name>
        <dbReference type="ChEBI" id="CHEBI:18420"/>
    </cofactor>
    <cofactor evidence="1">
        <name>Mn(2+)</name>
        <dbReference type="ChEBI" id="CHEBI:29035"/>
    </cofactor>
</comment>
<comment type="subunit">
    <text evidence="1 2">Forms an activin receptor complex with activin type II receptors such as ACVR1B. Interacts with VPS39. Interacts with DYNLT1. Interacts with BMP3. Interacts with BMP2.</text>
</comment>
<comment type="subcellular location">
    <subcellularLocation>
        <location evidence="3">Cell membrane</location>
        <topology evidence="1">Single-pass type I membrane protein</topology>
    </subcellularLocation>
</comment>
<comment type="PTM">
    <text evidence="1">Phosphorylated. Constitutive phosphorylation is in part catalyzed by its own kinase activity (By similarity).</text>
</comment>
<comment type="similarity">
    <text evidence="8">Belongs to the protein kinase superfamily. TKL Ser/Thr protein kinase family. TGFB receptor subfamily.</text>
</comment>
<proteinExistence type="evidence at protein level"/>
<gene>
    <name type="primary">Acvr2b</name>
    <name type="synonym">Actriib</name>
</gene>
<accession>P38445</accession>
<accession>Q4V8J8</accession>
<keyword id="KW-0002">3D-structure</keyword>
<keyword id="KW-0067">ATP-binding</keyword>
<keyword id="KW-1003">Cell membrane</keyword>
<keyword id="KW-1015">Disulfide bond</keyword>
<keyword id="KW-0325">Glycoprotein</keyword>
<keyword id="KW-0418">Kinase</keyword>
<keyword id="KW-0460">Magnesium</keyword>
<keyword id="KW-0464">Manganese</keyword>
<keyword id="KW-0472">Membrane</keyword>
<keyword id="KW-0479">Metal-binding</keyword>
<keyword id="KW-0547">Nucleotide-binding</keyword>
<keyword id="KW-0597">Phosphoprotein</keyword>
<keyword id="KW-0675">Receptor</keyword>
<keyword id="KW-1185">Reference proteome</keyword>
<keyword id="KW-0723">Serine/threonine-protein kinase</keyword>
<keyword id="KW-0732">Signal</keyword>
<keyword id="KW-0808">Transferase</keyword>
<keyword id="KW-0812">Transmembrane</keyword>
<keyword id="KW-1133">Transmembrane helix</keyword>
<sequence length="513" mass="57857">MTAPWAALALLWGSLCAGSGRGEAETRECIYYNANWELERTNQSGLERCEGEQDKRLHCYASWRNSSGTIELVKKGCWLDDFNCYDRQECVATEENPQVYFCCCEGNFCNERFTHLPEPGGPEVTYEPPPTAPTLLTVLAYSLLPIGGLSLIVLLAFWMYRHRKPPYGHVDIHEDPGPPPPSPLVGLKPLQLLEIKARGRFGCVWKAQLMNDFVAVKIFPLQDKQSWQSEREIFSTPGMKHENLLQFIAAEKRGCSNLEVELWLITAFHDKGSLTDYLKGNIITWNELCHVAETMSRGLSYLHEDVPWCRGEGHKPSIAHRDFKSKNVLLKSDLTAVLADFGLAVRFEPGKPPGDTHGQVGTRRYMAPEVLEGAINFQRDAFLRIDMYAMGLVLWELVSRCKAADGPVDEYMLPFEEEIGQHPSLEELQEVVVHKKMRPTIKDHWLKHPGLAQLCVTIEECWDHDAEARLSAGCVEERVSLIRRSVNSSTSDCLVSLVTSVTNVDLLPKESSI</sequence>
<reference key="1">
    <citation type="journal article" date="1992" name="Biochem. Biophys. Res. Commun.">
        <title>Molecular cloning and characterization of a novel rat activin receptor.</title>
        <authorList>
            <person name="Legerski R."/>
            <person name="Zhou X."/>
            <person name="Dresback J."/>
            <person name="Eberspaecher H."/>
            <person name="McKinney S."/>
            <person name="Segarini P."/>
            <person name="de Crombrugghe B."/>
        </authorList>
    </citation>
    <scope>NUCLEOTIDE SEQUENCE [MRNA]</scope>
</reference>
<reference key="2">
    <citation type="journal article" date="1993" name="Endocrinology">
        <title>Expression of type II activin receptor genes in the male and female reproductive tissues of the rat.</title>
        <authorList>
            <person name="Feng Z.M."/>
            <person name="Madigan M.B."/>
            <person name="Chen C.L.C."/>
        </authorList>
    </citation>
    <scope>NUCLEOTIDE SEQUENCE [MRNA]</scope>
    <source>
        <strain>Sprague-Dawley</strain>
        <tissue>Testis</tissue>
    </source>
</reference>
<reference key="3">
    <citation type="journal article" date="2004" name="Genome Res.">
        <title>The status, quality, and expansion of the NIH full-length cDNA project: the Mammalian Gene Collection (MGC).</title>
        <authorList>
            <consortium name="The MGC Project Team"/>
        </authorList>
    </citation>
    <scope>NUCLEOTIDE SEQUENCE [LARGE SCALE MRNA]</scope>
    <source>
        <tissue>Placenta</tissue>
    </source>
</reference>
<reference key="4">
    <citation type="journal article" date="2003" name="EMBO J.">
        <title>Structures of an ActRIIB:activin A complex reveal a novel binding mode for TGF-beta ligand:receptor interactions.</title>
        <authorList>
            <person name="Thompson T.B."/>
            <person name="Woodruff T.K."/>
            <person name="Jardetzky T.S."/>
        </authorList>
    </citation>
    <scope>X-RAY CRYSTALLOGRAPHY (3.05 ANGSTROMS) OF 19-119 IN COMPLEX WITH HUMAN INHBA</scope>
    <scope>DISULFIDE BONDS</scope>
</reference>